<protein>
    <recommendedName>
        <fullName evidence="1">Cell division protein ZapD</fullName>
    </recommendedName>
    <alternativeName>
        <fullName evidence="1">Z ring-associated protein D</fullName>
    </alternativeName>
</protein>
<gene>
    <name evidence="1" type="primary">zapD</name>
    <name type="ordered locus">EcolC_3556</name>
</gene>
<sequence length="247" mass="28292">MQTQVLFEHPLNEKMRTWLRIEFLIQQLTVNLPIVDHAGALHFFRNVSELLDVFERGEVRTELLKELDRQQRKLQTWIGVPGVDQSRIEALIQQLKAAGSVLISAPRIGQFLREDRLIALVRQRLSIPGGCCSFDLPTLHIWLHLPQAQRDSQVETWIASLNPLTQALTMVLDLIRQSAPFRKQTSLNGFYQDNGGDADLLRLNLSLDSQLYPQISGHKSRFAIRFMPLDTENGQVPERLDFELACC</sequence>
<reference key="1">
    <citation type="submission" date="2008-02" db="EMBL/GenBank/DDBJ databases">
        <title>Complete sequence of Escherichia coli C str. ATCC 8739.</title>
        <authorList>
            <person name="Copeland A."/>
            <person name="Lucas S."/>
            <person name="Lapidus A."/>
            <person name="Glavina del Rio T."/>
            <person name="Dalin E."/>
            <person name="Tice H."/>
            <person name="Bruce D."/>
            <person name="Goodwin L."/>
            <person name="Pitluck S."/>
            <person name="Kiss H."/>
            <person name="Brettin T."/>
            <person name="Detter J.C."/>
            <person name="Han C."/>
            <person name="Kuske C.R."/>
            <person name="Schmutz J."/>
            <person name="Larimer F."/>
            <person name="Land M."/>
            <person name="Hauser L."/>
            <person name="Kyrpides N."/>
            <person name="Mikhailova N."/>
            <person name="Ingram L."/>
            <person name="Richardson P."/>
        </authorList>
    </citation>
    <scope>NUCLEOTIDE SEQUENCE [LARGE SCALE GENOMIC DNA]</scope>
    <source>
        <strain>ATCC 8739 / DSM 1576 / NBRC 3972 / NCIMB 8545 / WDCM 00012 / Crooks</strain>
    </source>
</reference>
<proteinExistence type="inferred from homology"/>
<keyword id="KW-0131">Cell cycle</keyword>
<keyword id="KW-0132">Cell division</keyword>
<keyword id="KW-0963">Cytoplasm</keyword>
<keyword id="KW-0717">Septation</keyword>
<feature type="chain" id="PRO_1000084786" description="Cell division protein ZapD">
    <location>
        <begin position="1"/>
        <end position="247"/>
    </location>
</feature>
<organism>
    <name type="scientific">Escherichia coli (strain ATCC 8739 / DSM 1576 / NBRC 3972 / NCIMB 8545 / WDCM 00012 / Crooks)</name>
    <dbReference type="NCBI Taxonomy" id="481805"/>
    <lineage>
        <taxon>Bacteria</taxon>
        <taxon>Pseudomonadati</taxon>
        <taxon>Pseudomonadota</taxon>
        <taxon>Gammaproteobacteria</taxon>
        <taxon>Enterobacterales</taxon>
        <taxon>Enterobacteriaceae</taxon>
        <taxon>Escherichia</taxon>
    </lineage>
</organism>
<dbReference type="EMBL" id="CP000946">
    <property type="protein sequence ID" value="ACA79170.1"/>
    <property type="molecule type" value="Genomic_DNA"/>
</dbReference>
<dbReference type="RefSeq" id="WP_001194734.1">
    <property type="nucleotide sequence ID" value="NZ_MTFT01000035.1"/>
</dbReference>
<dbReference type="SMR" id="B1IR77"/>
<dbReference type="GeneID" id="93777333"/>
<dbReference type="KEGG" id="ecl:EcolC_3556"/>
<dbReference type="HOGENOM" id="CLU_076303_0_0_6"/>
<dbReference type="GO" id="GO:0032153">
    <property type="term" value="C:cell division site"/>
    <property type="evidence" value="ECO:0007669"/>
    <property type="project" value="TreeGrafter"/>
</dbReference>
<dbReference type="GO" id="GO:0005737">
    <property type="term" value="C:cytoplasm"/>
    <property type="evidence" value="ECO:0007669"/>
    <property type="project" value="UniProtKB-SubCell"/>
</dbReference>
<dbReference type="GO" id="GO:0000917">
    <property type="term" value="P:division septum assembly"/>
    <property type="evidence" value="ECO:0007669"/>
    <property type="project" value="UniProtKB-KW"/>
</dbReference>
<dbReference type="GO" id="GO:0043093">
    <property type="term" value="P:FtsZ-dependent cytokinesis"/>
    <property type="evidence" value="ECO:0007669"/>
    <property type="project" value="UniProtKB-UniRule"/>
</dbReference>
<dbReference type="FunFam" id="1.10.3900.10:FF:000001">
    <property type="entry name" value="Cell division protein ZapD"/>
    <property type="match status" value="1"/>
</dbReference>
<dbReference type="FunFam" id="2.60.440.10:FF:000001">
    <property type="entry name" value="Cell division protein ZapD"/>
    <property type="match status" value="1"/>
</dbReference>
<dbReference type="Gene3D" id="1.10.3900.10">
    <property type="entry name" value="YacF-like"/>
    <property type="match status" value="1"/>
</dbReference>
<dbReference type="Gene3D" id="2.60.440.10">
    <property type="entry name" value="YacF-like domains"/>
    <property type="match status" value="1"/>
</dbReference>
<dbReference type="HAMAP" id="MF_01092">
    <property type="entry name" value="ZapD"/>
    <property type="match status" value="1"/>
</dbReference>
<dbReference type="InterPro" id="IPR009777">
    <property type="entry name" value="ZapD"/>
</dbReference>
<dbReference type="InterPro" id="IPR027462">
    <property type="entry name" value="ZapD_C"/>
</dbReference>
<dbReference type="InterPro" id="IPR036268">
    <property type="entry name" value="ZapD_sf"/>
</dbReference>
<dbReference type="NCBIfam" id="NF003653">
    <property type="entry name" value="PRK05287.1-1"/>
    <property type="match status" value="1"/>
</dbReference>
<dbReference type="NCBIfam" id="NF003655">
    <property type="entry name" value="PRK05287.1-3"/>
    <property type="match status" value="1"/>
</dbReference>
<dbReference type="PANTHER" id="PTHR39455">
    <property type="entry name" value="CELL DIVISION PROTEIN ZAPD"/>
    <property type="match status" value="1"/>
</dbReference>
<dbReference type="PANTHER" id="PTHR39455:SF1">
    <property type="entry name" value="CELL DIVISION PROTEIN ZAPD"/>
    <property type="match status" value="1"/>
</dbReference>
<dbReference type="Pfam" id="PF07072">
    <property type="entry name" value="ZapD"/>
    <property type="match status" value="1"/>
</dbReference>
<dbReference type="SUPFAM" id="SSF160950">
    <property type="entry name" value="YacF-like"/>
    <property type="match status" value="1"/>
</dbReference>
<evidence type="ECO:0000255" key="1">
    <source>
        <dbReference type="HAMAP-Rule" id="MF_01092"/>
    </source>
</evidence>
<comment type="function">
    <text evidence="1">Cell division factor that enhances FtsZ-ring assembly. Directly interacts with FtsZ and promotes bundling of FtsZ protofilaments, with a reduction in FtsZ GTPase activity.</text>
</comment>
<comment type="subunit">
    <text evidence="1">Interacts with FtsZ.</text>
</comment>
<comment type="subcellular location">
    <subcellularLocation>
        <location evidence="1">Cytoplasm</location>
    </subcellularLocation>
    <text evidence="1">Localizes to mid-cell in an FtsZ-dependent manner.</text>
</comment>
<comment type="similarity">
    <text evidence="1">Belongs to the ZapD family.</text>
</comment>
<name>ZAPD_ECOLC</name>
<accession>B1IR77</accession>